<proteinExistence type="inferred from homology"/>
<accession>Q1ZXE7</accession>
<sequence length="229" mass="25874">MGCFHSREPTATGKTKKEEPTSAVKTNKEEKSSNYVSEPTTMEKIKKDDVYTIILIGDQATGKSSVLQRFKNNQFEVCHKPSPIIIDCFTKKIQIEGKKISLKCYDTAGQEKFRALSQSYYRCADGIMLFYDIANQKTFDNVGRWLEEVHRLAGPNVPILIIANKCDLNEKRVVNFNNAKKFADDKNIPIIEVSAKESLGVEEAFIKLASEINKTWKPLPDNETVTIGM</sequence>
<evidence type="ECO:0000250" key="1"/>
<evidence type="ECO:0000255" key="2"/>
<evidence type="ECO:0000256" key="3">
    <source>
        <dbReference type="SAM" id="MobiDB-lite"/>
    </source>
</evidence>
<evidence type="ECO:0000305" key="4"/>
<gene>
    <name type="primary">rabZ</name>
    <name type="ORF">DDB_G0286169</name>
</gene>
<dbReference type="EMBL" id="AAFI02000085">
    <property type="protein sequence ID" value="EAS66851.2"/>
    <property type="molecule type" value="Genomic_DNA"/>
</dbReference>
<dbReference type="RefSeq" id="XP_001134534.2">
    <property type="nucleotide sequence ID" value="XM_001134534.2"/>
</dbReference>
<dbReference type="SMR" id="Q1ZXE7"/>
<dbReference type="STRING" id="44689.Q1ZXE7"/>
<dbReference type="PaxDb" id="44689-DDB0233188"/>
<dbReference type="EnsemblProtists" id="EAS66851">
    <property type="protein sequence ID" value="EAS66851"/>
    <property type="gene ID" value="DDB_G0286169"/>
</dbReference>
<dbReference type="GeneID" id="8625453"/>
<dbReference type="KEGG" id="ddi:DDB_G0286169"/>
<dbReference type="dictyBase" id="DDB_G0286169">
    <property type="gene designation" value="rabZ"/>
</dbReference>
<dbReference type="VEuPathDB" id="AmoebaDB:DDB_G0286169"/>
<dbReference type="eggNOG" id="KOG0084">
    <property type="taxonomic scope" value="Eukaryota"/>
</dbReference>
<dbReference type="HOGENOM" id="CLU_041217_10_6_1"/>
<dbReference type="InParanoid" id="Q1ZXE7"/>
<dbReference type="OMA" id="YCSANGA"/>
<dbReference type="PhylomeDB" id="Q1ZXE7"/>
<dbReference type="Reactome" id="R-DDI-210500">
    <property type="pathway name" value="Glutamate Neurotransmitter Release Cycle"/>
</dbReference>
<dbReference type="Reactome" id="R-DDI-6798695">
    <property type="pathway name" value="Neutrophil degranulation"/>
</dbReference>
<dbReference type="Reactome" id="R-DDI-8873719">
    <property type="pathway name" value="RAB geranylgeranylation"/>
</dbReference>
<dbReference type="Reactome" id="R-DDI-8876198">
    <property type="pathway name" value="RAB GEFs exchange GTP for GDP on RABs"/>
</dbReference>
<dbReference type="PRO" id="PR:Q1ZXE7"/>
<dbReference type="Proteomes" id="UP000002195">
    <property type="component" value="Chromosome 4"/>
</dbReference>
<dbReference type="GO" id="GO:0016020">
    <property type="term" value="C:membrane"/>
    <property type="evidence" value="ECO:0000318"/>
    <property type="project" value="GO_Central"/>
</dbReference>
<dbReference type="GO" id="GO:0005525">
    <property type="term" value="F:GTP binding"/>
    <property type="evidence" value="ECO:0007669"/>
    <property type="project" value="UniProtKB-KW"/>
</dbReference>
<dbReference type="GO" id="GO:0003924">
    <property type="term" value="F:GTPase activity"/>
    <property type="evidence" value="ECO:0000318"/>
    <property type="project" value="GO_Central"/>
</dbReference>
<dbReference type="GO" id="GO:0006887">
    <property type="term" value="P:exocytosis"/>
    <property type="evidence" value="ECO:0000318"/>
    <property type="project" value="GO_Central"/>
</dbReference>
<dbReference type="CDD" id="cd00154">
    <property type="entry name" value="Rab"/>
    <property type="match status" value="1"/>
</dbReference>
<dbReference type="FunFam" id="3.40.50.300:FF:001129">
    <property type="entry name" value="ras-related protein Rab-44 isoform X2"/>
    <property type="match status" value="1"/>
</dbReference>
<dbReference type="Gene3D" id="3.40.50.300">
    <property type="entry name" value="P-loop containing nucleotide triphosphate hydrolases"/>
    <property type="match status" value="1"/>
</dbReference>
<dbReference type="InterPro" id="IPR027417">
    <property type="entry name" value="P-loop_NTPase"/>
</dbReference>
<dbReference type="InterPro" id="IPR050209">
    <property type="entry name" value="Rab_GTPases_membrane_traffic"/>
</dbReference>
<dbReference type="InterPro" id="IPR005225">
    <property type="entry name" value="Small_GTP-bd"/>
</dbReference>
<dbReference type="InterPro" id="IPR001806">
    <property type="entry name" value="Small_GTPase"/>
</dbReference>
<dbReference type="NCBIfam" id="TIGR00231">
    <property type="entry name" value="small_GTP"/>
    <property type="match status" value="1"/>
</dbReference>
<dbReference type="PANTHER" id="PTHR47979">
    <property type="entry name" value="DRAB11-RELATED"/>
    <property type="match status" value="1"/>
</dbReference>
<dbReference type="Pfam" id="PF00071">
    <property type="entry name" value="Ras"/>
    <property type="match status" value="1"/>
</dbReference>
<dbReference type="PRINTS" id="PR00449">
    <property type="entry name" value="RASTRNSFRMNG"/>
</dbReference>
<dbReference type="SMART" id="SM00175">
    <property type="entry name" value="RAB"/>
    <property type="match status" value="1"/>
</dbReference>
<dbReference type="SMART" id="SM00176">
    <property type="entry name" value="RAN"/>
    <property type="match status" value="1"/>
</dbReference>
<dbReference type="SMART" id="SM00173">
    <property type="entry name" value="RAS"/>
    <property type="match status" value="1"/>
</dbReference>
<dbReference type="SMART" id="SM00174">
    <property type="entry name" value="RHO"/>
    <property type="match status" value="1"/>
</dbReference>
<dbReference type="SUPFAM" id="SSF52540">
    <property type="entry name" value="P-loop containing nucleoside triphosphate hydrolases"/>
    <property type="match status" value="1"/>
</dbReference>
<dbReference type="PROSITE" id="PS51419">
    <property type="entry name" value="RAB"/>
    <property type="match status" value="1"/>
</dbReference>
<feature type="initiator methionine" description="Removed" evidence="2">
    <location>
        <position position="1"/>
    </location>
</feature>
<feature type="chain" id="PRO_0000332775" description="Ras-related protein RabZ">
    <location>
        <begin position="2"/>
        <end position="229"/>
    </location>
</feature>
<feature type="region of interest" description="Disordered" evidence="3">
    <location>
        <begin position="1"/>
        <end position="39"/>
    </location>
</feature>
<feature type="short sequence motif" description="Effector region" evidence="1">
    <location>
        <begin position="79"/>
        <end position="88"/>
    </location>
</feature>
<feature type="compositionally biased region" description="Basic and acidic residues" evidence="3">
    <location>
        <begin position="15"/>
        <end position="32"/>
    </location>
</feature>
<feature type="binding site" evidence="1">
    <location>
        <begin position="57"/>
        <end position="64"/>
    </location>
    <ligand>
        <name>GTP</name>
        <dbReference type="ChEBI" id="CHEBI:37565"/>
    </ligand>
</feature>
<feature type="binding site" evidence="1">
    <location>
        <begin position="106"/>
        <end position="110"/>
    </location>
    <ligand>
        <name>GTP</name>
        <dbReference type="ChEBI" id="CHEBI:37565"/>
    </ligand>
</feature>
<feature type="binding site" evidence="1">
    <location>
        <begin position="164"/>
        <end position="167"/>
    </location>
    <ligand>
        <name>GTP</name>
        <dbReference type="ChEBI" id="CHEBI:37565"/>
    </ligand>
</feature>
<feature type="lipid moiety-binding region" description="N-myristoyl glycine" evidence="2">
    <location>
        <position position="2"/>
    </location>
</feature>
<feature type="lipid moiety-binding region" description="S-palmitoyl cysteine" evidence="2">
    <location>
        <position position="3"/>
    </location>
</feature>
<comment type="PTM">
    <text>Although this sequence lacks the C-terminal cysteine motifs subject to isoprenylation in other Rab proteins, it does have N-terminal myristoylation and S-palmitoylation sequence motifs.</text>
</comment>
<comment type="similarity">
    <text evidence="4">Belongs to the small GTPase superfamily. Rab family.</text>
</comment>
<organism>
    <name type="scientific">Dictyostelium discoideum</name>
    <name type="common">Social amoeba</name>
    <dbReference type="NCBI Taxonomy" id="44689"/>
    <lineage>
        <taxon>Eukaryota</taxon>
        <taxon>Amoebozoa</taxon>
        <taxon>Evosea</taxon>
        <taxon>Eumycetozoa</taxon>
        <taxon>Dictyostelia</taxon>
        <taxon>Dictyosteliales</taxon>
        <taxon>Dictyosteliaceae</taxon>
        <taxon>Dictyostelium</taxon>
    </lineage>
</organism>
<protein>
    <recommendedName>
        <fullName>Ras-related protein RabZ</fullName>
    </recommendedName>
</protein>
<keyword id="KW-0342">GTP-binding</keyword>
<keyword id="KW-0449">Lipoprotein</keyword>
<keyword id="KW-0519">Myristate</keyword>
<keyword id="KW-0547">Nucleotide-binding</keyword>
<keyword id="KW-0564">Palmitate</keyword>
<keyword id="KW-1185">Reference proteome</keyword>
<name>RABZ_DICDI</name>
<reference key="1">
    <citation type="journal article" date="2005" name="Nature">
        <title>The genome of the social amoeba Dictyostelium discoideum.</title>
        <authorList>
            <person name="Eichinger L."/>
            <person name="Pachebat J.A."/>
            <person name="Gloeckner G."/>
            <person name="Rajandream M.A."/>
            <person name="Sucgang R."/>
            <person name="Berriman M."/>
            <person name="Song J."/>
            <person name="Olsen R."/>
            <person name="Szafranski K."/>
            <person name="Xu Q."/>
            <person name="Tunggal B."/>
            <person name="Kummerfeld S."/>
            <person name="Madera M."/>
            <person name="Konfortov B.A."/>
            <person name="Rivero F."/>
            <person name="Bankier A.T."/>
            <person name="Lehmann R."/>
            <person name="Hamlin N."/>
            <person name="Davies R."/>
            <person name="Gaudet P."/>
            <person name="Fey P."/>
            <person name="Pilcher K."/>
            <person name="Chen G."/>
            <person name="Saunders D."/>
            <person name="Sodergren E.J."/>
            <person name="Davis P."/>
            <person name="Kerhornou A."/>
            <person name="Nie X."/>
            <person name="Hall N."/>
            <person name="Anjard C."/>
            <person name="Hemphill L."/>
            <person name="Bason N."/>
            <person name="Farbrother P."/>
            <person name="Desany B."/>
            <person name="Just E."/>
            <person name="Morio T."/>
            <person name="Rost R."/>
            <person name="Churcher C.M."/>
            <person name="Cooper J."/>
            <person name="Haydock S."/>
            <person name="van Driessche N."/>
            <person name="Cronin A."/>
            <person name="Goodhead I."/>
            <person name="Muzny D.M."/>
            <person name="Mourier T."/>
            <person name="Pain A."/>
            <person name="Lu M."/>
            <person name="Harper D."/>
            <person name="Lindsay R."/>
            <person name="Hauser H."/>
            <person name="James K.D."/>
            <person name="Quiles M."/>
            <person name="Madan Babu M."/>
            <person name="Saito T."/>
            <person name="Buchrieser C."/>
            <person name="Wardroper A."/>
            <person name="Felder M."/>
            <person name="Thangavelu M."/>
            <person name="Johnson D."/>
            <person name="Knights A."/>
            <person name="Loulseged H."/>
            <person name="Mungall K.L."/>
            <person name="Oliver K."/>
            <person name="Price C."/>
            <person name="Quail M.A."/>
            <person name="Urushihara H."/>
            <person name="Hernandez J."/>
            <person name="Rabbinowitsch E."/>
            <person name="Steffen D."/>
            <person name="Sanders M."/>
            <person name="Ma J."/>
            <person name="Kohara Y."/>
            <person name="Sharp S."/>
            <person name="Simmonds M.N."/>
            <person name="Spiegler S."/>
            <person name="Tivey A."/>
            <person name="Sugano S."/>
            <person name="White B."/>
            <person name="Walker D."/>
            <person name="Woodward J.R."/>
            <person name="Winckler T."/>
            <person name="Tanaka Y."/>
            <person name="Shaulsky G."/>
            <person name="Schleicher M."/>
            <person name="Weinstock G.M."/>
            <person name="Rosenthal A."/>
            <person name="Cox E.C."/>
            <person name="Chisholm R.L."/>
            <person name="Gibbs R.A."/>
            <person name="Loomis W.F."/>
            <person name="Platzer M."/>
            <person name="Kay R.R."/>
            <person name="Williams J.G."/>
            <person name="Dear P.H."/>
            <person name="Noegel A.A."/>
            <person name="Barrell B.G."/>
            <person name="Kuspa A."/>
        </authorList>
    </citation>
    <scope>NUCLEOTIDE SEQUENCE [LARGE SCALE GENOMIC DNA]</scope>
    <source>
        <strain>AX4</strain>
    </source>
</reference>